<accession>A2XC52</accession>
<keyword id="KW-0150">Chloroplast</keyword>
<keyword id="KW-0934">Plastid</keyword>
<keyword id="KW-1185">Reference proteome</keyword>
<keyword id="KW-0809">Transit peptide</keyword>
<feature type="transit peptide" description="Chloroplast" evidence="3">
    <location>
        <begin position="1"/>
        <end position="19"/>
    </location>
</feature>
<feature type="chain" id="PRO_0000457402" description="Protein EARLY STARVATION 1, chloroplastic">
    <location>
        <begin position="20"/>
        <end position="431"/>
    </location>
</feature>
<feature type="region of interest" description="Disordered" evidence="4">
    <location>
        <begin position="65"/>
        <end position="126"/>
    </location>
</feature>
<feature type="region of interest" description="Disordered" evidence="4">
    <location>
        <begin position="403"/>
        <end position="431"/>
    </location>
</feature>
<feature type="compositionally biased region" description="Pro residues" evidence="4">
    <location>
        <begin position="415"/>
        <end position="431"/>
    </location>
</feature>
<protein>
    <recommendedName>
        <fullName evidence="2">Protein EARLY STARVATION 1, chloroplastic</fullName>
    </recommendedName>
</protein>
<name>ESV1_ORYSI</name>
<gene>
    <name evidence="2" type="primary">ESV1</name>
    <name evidence="6" type="ORF">OsI_09872</name>
</gene>
<comment type="function">
    <text evidence="1 2">Binds preferentially to highly ordered alpha-glucans, such as starch and crystalline maltodextrins (By similarity). Involved in the organization of the starch granule matrix, thus influencing starch turnover by modulating the accessibility of starch polymers to modifying and degrading enzymes (By similarity). Required for the control of starch degradation in leaves and starch distribution in nonphotosynthetic parts (By similarity). Promotes gravitropic responses, negative in shoots but positive in roots, by facilitating starch granules (statoliths) formation in hypocotyls and roots columella (By similarity). Facilitates tight packing of starch granules in grains (By similarity).</text>
</comment>
<comment type="subcellular location">
    <subcellularLocation>
        <location evidence="1">Plastid</location>
        <location evidence="1">Chloroplast stroma</location>
    </subcellularLocation>
    <text evidence="1">Binds to starch granules in chloroplasts.</text>
</comment>
<comment type="similarity">
    <text evidence="5">Belongs to the ESV1 family.</text>
</comment>
<reference key="1">
    <citation type="journal article" date="2005" name="PLoS Biol.">
        <title>The genomes of Oryza sativa: a history of duplications.</title>
        <authorList>
            <person name="Yu J."/>
            <person name="Wang J."/>
            <person name="Lin W."/>
            <person name="Li S."/>
            <person name="Li H."/>
            <person name="Zhou J."/>
            <person name="Ni P."/>
            <person name="Dong W."/>
            <person name="Hu S."/>
            <person name="Zeng C."/>
            <person name="Zhang J."/>
            <person name="Zhang Y."/>
            <person name="Li R."/>
            <person name="Xu Z."/>
            <person name="Li S."/>
            <person name="Li X."/>
            <person name="Zheng H."/>
            <person name="Cong L."/>
            <person name="Lin L."/>
            <person name="Yin J."/>
            <person name="Geng J."/>
            <person name="Li G."/>
            <person name="Shi J."/>
            <person name="Liu J."/>
            <person name="Lv H."/>
            <person name="Li J."/>
            <person name="Wang J."/>
            <person name="Deng Y."/>
            <person name="Ran L."/>
            <person name="Shi X."/>
            <person name="Wang X."/>
            <person name="Wu Q."/>
            <person name="Li C."/>
            <person name="Ren X."/>
            <person name="Wang J."/>
            <person name="Wang X."/>
            <person name="Li D."/>
            <person name="Liu D."/>
            <person name="Zhang X."/>
            <person name="Ji Z."/>
            <person name="Zhao W."/>
            <person name="Sun Y."/>
            <person name="Zhang Z."/>
            <person name="Bao J."/>
            <person name="Han Y."/>
            <person name="Dong L."/>
            <person name="Ji J."/>
            <person name="Chen P."/>
            <person name="Wu S."/>
            <person name="Liu J."/>
            <person name="Xiao Y."/>
            <person name="Bu D."/>
            <person name="Tan J."/>
            <person name="Yang L."/>
            <person name="Ye C."/>
            <person name="Zhang J."/>
            <person name="Xu J."/>
            <person name="Zhou Y."/>
            <person name="Yu Y."/>
            <person name="Zhang B."/>
            <person name="Zhuang S."/>
            <person name="Wei H."/>
            <person name="Liu B."/>
            <person name="Lei M."/>
            <person name="Yu H."/>
            <person name="Li Y."/>
            <person name="Xu H."/>
            <person name="Wei S."/>
            <person name="He X."/>
            <person name="Fang L."/>
            <person name="Zhang Z."/>
            <person name="Zhang Y."/>
            <person name="Huang X."/>
            <person name="Su Z."/>
            <person name="Tong W."/>
            <person name="Li J."/>
            <person name="Tong Z."/>
            <person name="Li S."/>
            <person name="Ye J."/>
            <person name="Wang L."/>
            <person name="Fang L."/>
            <person name="Lei T."/>
            <person name="Chen C.-S."/>
            <person name="Chen H.-C."/>
            <person name="Xu Z."/>
            <person name="Li H."/>
            <person name="Huang H."/>
            <person name="Zhang F."/>
            <person name="Xu H."/>
            <person name="Li N."/>
            <person name="Zhao C."/>
            <person name="Li S."/>
            <person name="Dong L."/>
            <person name="Huang Y."/>
            <person name="Li L."/>
            <person name="Xi Y."/>
            <person name="Qi Q."/>
            <person name="Li W."/>
            <person name="Zhang B."/>
            <person name="Hu W."/>
            <person name="Zhang Y."/>
            <person name="Tian X."/>
            <person name="Jiao Y."/>
            <person name="Liang X."/>
            <person name="Jin J."/>
            <person name="Gao L."/>
            <person name="Zheng W."/>
            <person name="Hao B."/>
            <person name="Liu S.-M."/>
            <person name="Wang W."/>
            <person name="Yuan L."/>
            <person name="Cao M."/>
            <person name="McDermott J."/>
            <person name="Samudrala R."/>
            <person name="Wang J."/>
            <person name="Wong G.K.-S."/>
            <person name="Yang H."/>
        </authorList>
    </citation>
    <scope>NUCLEOTIDE SEQUENCE [LARGE SCALE GENOMIC DNA]</scope>
    <source>
        <strain>cv. 93-11</strain>
    </source>
</reference>
<evidence type="ECO:0000250" key="1">
    <source>
        <dbReference type="UniProtKB" id="F4I9G2"/>
    </source>
</evidence>
<evidence type="ECO:0000250" key="2">
    <source>
        <dbReference type="UniProtKB" id="Q8H8C6"/>
    </source>
</evidence>
<evidence type="ECO:0000255" key="3"/>
<evidence type="ECO:0000256" key="4">
    <source>
        <dbReference type="SAM" id="MobiDB-lite"/>
    </source>
</evidence>
<evidence type="ECO:0000305" key="5"/>
<evidence type="ECO:0000312" key="6">
    <source>
        <dbReference type="EMBL" id="EAY88412.1"/>
    </source>
</evidence>
<dbReference type="EMBL" id="CM000128">
    <property type="protein sequence ID" value="EAY88412.1"/>
    <property type="molecule type" value="Genomic_DNA"/>
</dbReference>
<dbReference type="STRING" id="39946.A2XC52"/>
<dbReference type="EnsemblPlants" id="BGIOSGA011784-TA">
    <property type="protein sequence ID" value="BGIOSGA011784-PA"/>
    <property type="gene ID" value="BGIOSGA011784"/>
</dbReference>
<dbReference type="Gramene" id="BGIOSGA011784-TA">
    <property type="protein sequence ID" value="BGIOSGA011784-PA"/>
    <property type="gene ID" value="BGIOSGA011784"/>
</dbReference>
<dbReference type="HOGENOM" id="CLU_040240_1_0_1"/>
<dbReference type="OMA" id="TRMGGQC"/>
<dbReference type="Proteomes" id="UP000007015">
    <property type="component" value="Chromosome 3"/>
</dbReference>
<dbReference type="GO" id="GO:0009570">
    <property type="term" value="C:chloroplast stroma"/>
    <property type="evidence" value="ECO:0007669"/>
    <property type="project" value="UniProtKB-SubCell"/>
</dbReference>
<dbReference type="GO" id="GO:0043036">
    <property type="term" value="C:starch grain"/>
    <property type="evidence" value="ECO:0007669"/>
    <property type="project" value="EnsemblPlants"/>
</dbReference>
<dbReference type="GO" id="GO:2001070">
    <property type="term" value="F:starch binding"/>
    <property type="evidence" value="ECO:0007669"/>
    <property type="project" value="EnsemblPlants"/>
</dbReference>
<dbReference type="GO" id="GO:0009959">
    <property type="term" value="P:negative gravitropism"/>
    <property type="evidence" value="ECO:0007669"/>
    <property type="project" value="EnsemblPlants"/>
</dbReference>
<dbReference type="GO" id="GO:0009958">
    <property type="term" value="P:positive gravitropism"/>
    <property type="evidence" value="ECO:0007669"/>
    <property type="project" value="EnsemblPlants"/>
</dbReference>
<dbReference type="GO" id="GO:0032948">
    <property type="term" value="P:regulation of alpha-glucan metabolic process"/>
    <property type="evidence" value="ECO:0007669"/>
    <property type="project" value="EnsemblPlants"/>
</dbReference>
<dbReference type="GO" id="GO:2000904">
    <property type="term" value="P:regulation of starch metabolic process"/>
    <property type="evidence" value="ECO:0007669"/>
    <property type="project" value="EnsemblPlants"/>
</dbReference>
<dbReference type="GO" id="GO:0048316">
    <property type="term" value="P:seed development"/>
    <property type="evidence" value="ECO:0007669"/>
    <property type="project" value="EnsemblPlants"/>
</dbReference>
<dbReference type="GO" id="GO:0062052">
    <property type="term" value="P:starch granule initiation"/>
    <property type="evidence" value="ECO:0007669"/>
    <property type="project" value="EnsemblPlants"/>
</dbReference>
<dbReference type="InterPro" id="IPR052495">
    <property type="entry name" value="Alpha-glucan_binding_chloro"/>
</dbReference>
<dbReference type="PANTHER" id="PTHR34113">
    <property type="entry name" value="INACTIVE PURPLE ACID PHOSPHATASE-LIKE PROTEIN"/>
    <property type="match status" value="1"/>
</dbReference>
<dbReference type="PANTHER" id="PTHR34113:SF3">
    <property type="entry name" value="PROTEIN EARLY STARVATION 1, CHLOROPLASTIC"/>
    <property type="match status" value="1"/>
</dbReference>
<sequence>MAACSRGLVARPFDLTARGAAHWPCPAPRRRAIRCCCRAQQEPRRRLSKAAAAAPERTEEWRIDGNKPAAAARGRRRASLTAMPSLPFPSPRSRRQWKQQNFYPRCTPRGPAPQSRDTPPKRDTGIASEKEWGINLLDEAVKESGTNEDGSTWYRESGDDRGDNGYRCRWARMGGQSHDGTTEWKETWWEKSDWTGYKELGAEKSGKNGAGDSWWEKWKEVLYQDEWSNLARIERSAEKQAKSGAENAGWYEKWWEKYDAKGWTEKGAHKYGRLNEQSWWERWGEHYDGRGFVLKWTDKWAETDLGTKWGDKWEEKFFAGIGSRQGETWHVSPGGDRWSRTWGEEHFGNGKVHKYGKSTTGESWDLVVDEETYYEAEPHYGWADVVGDSTQLLSIQPVERPPGVYPTIDFSASSPAPPSDDPPGMPPSPLE</sequence>
<organism>
    <name type="scientific">Oryza sativa subsp. indica</name>
    <name type="common">Rice</name>
    <dbReference type="NCBI Taxonomy" id="39946"/>
    <lineage>
        <taxon>Eukaryota</taxon>
        <taxon>Viridiplantae</taxon>
        <taxon>Streptophyta</taxon>
        <taxon>Embryophyta</taxon>
        <taxon>Tracheophyta</taxon>
        <taxon>Spermatophyta</taxon>
        <taxon>Magnoliopsida</taxon>
        <taxon>Liliopsida</taxon>
        <taxon>Poales</taxon>
        <taxon>Poaceae</taxon>
        <taxon>BOP clade</taxon>
        <taxon>Oryzoideae</taxon>
        <taxon>Oryzeae</taxon>
        <taxon>Oryzinae</taxon>
        <taxon>Oryza</taxon>
        <taxon>Oryza sativa</taxon>
    </lineage>
</organism>
<proteinExistence type="inferred from homology"/>